<reference key="1">
    <citation type="journal article" date="2003" name="Nat. Genet.">
        <title>Comparative analysis of the genome sequences of Bordetella pertussis, Bordetella parapertussis and Bordetella bronchiseptica.</title>
        <authorList>
            <person name="Parkhill J."/>
            <person name="Sebaihia M."/>
            <person name="Preston A."/>
            <person name="Murphy L.D."/>
            <person name="Thomson N.R."/>
            <person name="Harris D.E."/>
            <person name="Holden M.T.G."/>
            <person name="Churcher C.M."/>
            <person name="Bentley S.D."/>
            <person name="Mungall K.L."/>
            <person name="Cerdeno-Tarraga A.-M."/>
            <person name="Temple L."/>
            <person name="James K.D."/>
            <person name="Harris B."/>
            <person name="Quail M.A."/>
            <person name="Achtman M."/>
            <person name="Atkin R."/>
            <person name="Baker S."/>
            <person name="Basham D."/>
            <person name="Bason N."/>
            <person name="Cherevach I."/>
            <person name="Chillingworth T."/>
            <person name="Collins M."/>
            <person name="Cronin A."/>
            <person name="Davis P."/>
            <person name="Doggett J."/>
            <person name="Feltwell T."/>
            <person name="Goble A."/>
            <person name="Hamlin N."/>
            <person name="Hauser H."/>
            <person name="Holroyd S."/>
            <person name="Jagels K."/>
            <person name="Leather S."/>
            <person name="Moule S."/>
            <person name="Norberczak H."/>
            <person name="O'Neil S."/>
            <person name="Ormond D."/>
            <person name="Price C."/>
            <person name="Rabbinowitsch E."/>
            <person name="Rutter S."/>
            <person name="Sanders M."/>
            <person name="Saunders D."/>
            <person name="Seeger K."/>
            <person name="Sharp S."/>
            <person name="Simmonds M."/>
            <person name="Skelton J."/>
            <person name="Squares R."/>
            <person name="Squares S."/>
            <person name="Stevens K."/>
            <person name="Unwin L."/>
            <person name="Whitehead S."/>
            <person name="Barrell B.G."/>
            <person name="Maskell D.J."/>
        </authorList>
    </citation>
    <scope>NUCLEOTIDE SEQUENCE [LARGE SCALE GENOMIC DNA]</scope>
    <source>
        <strain>Tohama I / ATCC BAA-589 / NCTC 13251</strain>
    </source>
</reference>
<keyword id="KW-0030">Aminoacyl-tRNA synthetase</keyword>
<keyword id="KW-0067">ATP-binding</keyword>
<keyword id="KW-0963">Cytoplasm</keyword>
<keyword id="KW-0436">Ligase</keyword>
<keyword id="KW-0547">Nucleotide-binding</keyword>
<keyword id="KW-0648">Protein biosynthesis</keyword>
<keyword id="KW-1185">Reference proteome</keyword>
<gene>
    <name evidence="1" type="primary">serS</name>
    <name type="ordered locus">BP2470</name>
</gene>
<feature type="chain" id="PRO_0000122014" description="Serine--tRNA ligase">
    <location>
        <begin position="1"/>
        <end position="451"/>
    </location>
</feature>
<feature type="binding site" evidence="1">
    <location>
        <begin position="258"/>
        <end position="260"/>
    </location>
    <ligand>
        <name>L-serine</name>
        <dbReference type="ChEBI" id="CHEBI:33384"/>
    </ligand>
</feature>
<feature type="binding site" evidence="1">
    <location>
        <begin position="289"/>
        <end position="291"/>
    </location>
    <ligand>
        <name>ATP</name>
        <dbReference type="ChEBI" id="CHEBI:30616"/>
    </ligand>
</feature>
<feature type="binding site" evidence="1">
    <location>
        <position position="312"/>
    </location>
    <ligand>
        <name>L-serine</name>
        <dbReference type="ChEBI" id="CHEBI:33384"/>
    </ligand>
</feature>
<feature type="binding site" evidence="1">
    <location>
        <begin position="376"/>
        <end position="379"/>
    </location>
    <ligand>
        <name>ATP</name>
        <dbReference type="ChEBI" id="CHEBI:30616"/>
    </ligand>
</feature>
<feature type="binding site" evidence="1">
    <location>
        <position position="411"/>
    </location>
    <ligand>
        <name>L-serine</name>
        <dbReference type="ChEBI" id="CHEBI:33384"/>
    </ligand>
</feature>
<organism>
    <name type="scientific">Bordetella pertussis (strain Tohama I / ATCC BAA-589 / NCTC 13251)</name>
    <dbReference type="NCBI Taxonomy" id="257313"/>
    <lineage>
        <taxon>Bacteria</taxon>
        <taxon>Pseudomonadati</taxon>
        <taxon>Pseudomonadota</taxon>
        <taxon>Betaproteobacteria</taxon>
        <taxon>Burkholderiales</taxon>
        <taxon>Alcaligenaceae</taxon>
        <taxon>Bordetella</taxon>
    </lineage>
</organism>
<name>SYS_BORPE</name>
<comment type="function">
    <text evidence="1">Catalyzes the attachment of serine to tRNA(Ser). Is also able to aminoacylate tRNA(Sec) with serine, to form the misacylated tRNA L-seryl-tRNA(Sec), which will be further converted into selenocysteinyl-tRNA(Sec).</text>
</comment>
<comment type="catalytic activity">
    <reaction evidence="1">
        <text>tRNA(Ser) + L-serine + ATP = L-seryl-tRNA(Ser) + AMP + diphosphate + H(+)</text>
        <dbReference type="Rhea" id="RHEA:12292"/>
        <dbReference type="Rhea" id="RHEA-COMP:9669"/>
        <dbReference type="Rhea" id="RHEA-COMP:9703"/>
        <dbReference type="ChEBI" id="CHEBI:15378"/>
        <dbReference type="ChEBI" id="CHEBI:30616"/>
        <dbReference type="ChEBI" id="CHEBI:33019"/>
        <dbReference type="ChEBI" id="CHEBI:33384"/>
        <dbReference type="ChEBI" id="CHEBI:78442"/>
        <dbReference type="ChEBI" id="CHEBI:78533"/>
        <dbReference type="ChEBI" id="CHEBI:456215"/>
        <dbReference type="EC" id="6.1.1.11"/>
    </reaction>
</comment>
<comment type="catalytic activity">
    <reaction evidence="1">
        <text>tRNA(Sec) + L-serine + ATP = L-seryl-tRNA(Sec) + AMP + diphosphate + H(+)</text>
        <dbReference type="Rhea" id="RHEA:42580"/>
        <dbReference type="Rhea" id="RHEA-COMP:9742"/>
        <dbReference type="Rhea" id="RHEA-COMP:10128"/>
        <dbReference type="ChEBI" id="CHEBI:15378"/>
        <dbReference type="ChEBI" id="CHEBI:30616"/>
        <dbReference type="ChEBI" id="CHEBI:33019"/>
        <dbReference type="ChEBI" id="CHEBI:33384"/>
        <dbReference type="ChEBI" id="CHEBI:78442"/>
        <dbReference type="ChEBI" id="CHEBI:78533"/>
        <dbReference type="ChEBI" id="CHEBI:456215"/>
        <dbReference type="EC" id="6.1.1.11"/>
    </reaction>
</comment>
<comment type="pathway">
    <text evidence="1">Aminoacyl-tRNA biosynthesis; selenocysteinyl-tRNA(Sec) biosynthesis; L-seryl-tRNA(Sec) from L-serine and tRNA(Sec): step 1/1.</text>
</comment>
<comment type="subunit">
    <text evidence="1">Homodimer. The tRNA molecule binds across the dimer.</text>
</comment>
<comment type="subcellular location">
    <subcellularLocation>
        <location evidence="1">Cytoplasm</location>
    </subcellularLocation>
</comment>
<comment type="domain">
    <text evidence="1">Consists of two distinct domains, a catalytic core and a N-terminal extension that is involved in tRNA binding.</text>
</comment>
<comment type="similarity">
    <text evidence="1">Belongs to the class-II aminoacyl-tRNA synthetase family. Type-1 seryl-tRNA synthetase subfamily.</text>
</comment>
<evidence type="ECO:0000255" key="1">
    <source>
        <dbReference type="HAMAP-Rule" id="MF_00176"/>
    </source>
</evidence>
<dbReference type="EC" id="6.1.1.11" evidence="1"/>
<dbReference type="EMBL" id="BX640418">
    <property type="protein sequence ID" value="CAE42742.1"/>
    <property type="molecule type" value="Genomic_DNA"/>
</dbReference>
<dbReference type="RefSeq" id="NP_881097.1">
    <property type="nucleotide sequence ID" value="NC_002929.2"/>
</dbReference>
<dbReference type="RefSeq" id="WP_010930944.1">
    <property type="nucleotide sequence ID" value="NZ_CP039022.1"/>
</dbReference>
<dbReference type="SMR" id="Q7VW08"/>
<dbReference type="STRING" id="257313.BP2470"/>
<dbReference type="PaxDb" id="257313-BP2470"/>
<dbReference type="GeneID" id="69602369"/>
<dbReference type="KEGG" id="bpe:BP2470"/>
<dbReference type="PATRIC" id="fig|257313.5.peg.2663"/>
<dbReference type="eggNOG" id="COG0172">
    <property type="taxonomic scope" value="Bacteria"/>
</dbReference>
<dbReference type="HOGENOM" id="CLU_023797_1_1_4"/>
<dbReference type="UniPathway" id="UPA00906">
    <property type="reaction ID" value="UER00895"/>
</dbReference>
<dbReference type="Proteomes" id="UP000002676">
    <property type="component" value="Chromosome"/>
</dbReference>
<dbReference type="GO" id="GO:0005737">
    <property type="term" value="C:cytoplasm"/>
    <property type="evidence" value="ECO:0007669"/>
    <property type="project" value="UniProtKB-SubCell"/>
</dbReference>
<dbReference type="GO" id="GO:0005524">
    <property type="term" value="F:ATP binding"/>
    <property type="evidence" value="ECO:0007669"/>
    <property type="project" value="UniProtKB-UniRule"/>
</dbReference>
<dbReference type="GO" id="GO:0004828">
    <property type="term" value="F:serine-tRNA ligase activity"/>
    <property type="evidence" value="ECO:0007669"/>
    <property type="project" value="UniProtKB-UniRule"/>
</dbReference>
<dbReference type="GO" id="GO:0016260">
    <property type="term" value="P:selenocysteine biosynthetic process"/>
    <property type="evidence" value="ECO:0007669"/>
    <property type="project" value="UniProtKB-UniRule"/>
</dbReference>
<dbReference type="GO" id="GO:0006434">
    <property type="term" value="P:seryl-tRNA aminoacylation"/>
    <property type="evidence" value="ECO:0007669"/>
    <property type="project" value="UniProtKB-UniRule"/>
</dbReference>
<dbReference type="CDD" id="cd00770">
    <property type="entry name" value="SerRS_core"/>
    <property type="match status" value="1"/>
</dbReference>
<dbReference type="Gene3D" id="3.30.930.10">
    <property type="entry name" value="Bira Bifunctional Protein, Domain 2"/>
    <property type="match status" value="1"/>
</dbReference>
<dbReference type="Gene3D" id="1.10.287.40">
    <property type="entry name" value="Serine-tRNA synthetase, tRNA binding domain"/>
    <property type="match status" value="1"/>
</dbReference>
<dbReference type="HAMAP" id="MF_00176">
    <property type="entry name" value="Ser_tRNA_synth_type1"/>
    <property type="match status" value="1"/>
</dbReference>
<dbReference type="InterPro" id="IPR002314">
    <property type="entry name" value="aa-tRNA-synt_IIb"/>
</dbReference>
<dbReference type="InterPro" id="IPR006195">
    <property type="entry name" value="aa-tRNA-synth_II"/>
</dbReference>
<dbReference type="InterPro" id="IPR045864">
    <property type="entry name" value="aa-tRNA-synth_II/BPL/LPL"/>
</dbReference>
<dbReference type="InterPro" id="IPR002317">
    <property type="entry name" value="Ser-tRNA-ligase_type_1"/>
</dbReference>
<dbReference type="InterPro" id="IPR015866">
    <property type="entry name" value="Ser-tRNA-synth_1_N"/>
</dbReference>
<dbReference type="InterPro" id="IPR042103">
    <property type="entry name" value="SerRS_1_N_sf"/>
</dbReference>
<dbReference type="InterPro" id="IPR033729">
    <property type="entry name" value="SerRS_core"/>
</dbReference>
<dbReference type="InterPro" id="IPR010978">
    <property type="entry name" value="tRNA-bd_arm"/>
</dbReference>
<dbReference type="NCBIfam" id="TIGR00414">
    <property type="entry name" value="serS"/>
    <property type="match status" value="1"/>
</dbReference>
<dbReference type="PANTHER" id="PTHR43697:SF1">
    <property type="entry name" value="SERINE--TRNA LIGASE"/>
    <property type="match status" value="1"/>
</dbReference>
<dbReference type="PANTHER" id="PTHR43697">
    <property type="entry name" value="SERYL-TRNA SYNTHETASE"/>
    <property type="match status" value="1"/>
</dbReference>
<dbReference type="Pfam" id="PF02403">
    <property type="entry name" value="Seryl_tRNA_N"/>
    <property type="match status" value="1"/>
</dbReference>
<dbReference type="Pfam" id="PF00587">
    <property type="entry name" value="tRNA-synt_2b"/>
    <property type="match status" value="1"/>
</dbReference>
<dbReference type="PIRSF" id="PIRSF001529">
    <property type="entry name" value="Ser-tRNA-synth_IIa"/>
    <property type="match status" value="1"/>
</dbReference>
<dbReference type="PRINTS" id="PR00981">
    <property type="entry name" value="TRNASYNTHSER"/>
</dbReference>
<dbReference type="SUPFAM" id="SSF55681">
    <property type="entry name" value="Class II aaRS and biotin synthetases"/>
    <property type="match status" value="1"/>
</dbReference>
<dbReference type="SUPFAM" id="SSF46589">
    <property type="entry name" value="tRNA-binding arm"/>
    <property type="match status" value="1"/>
</dbReference>
<dbReference type="PROSITE" id="PS50862">
    <property type="entry name" value="AA_TRNA_LIGASE_II"/>
    <property type="match status" value="1"/>
</dbReference>
<protein>
    <recommendedName>
        <fullName evidence="1">Serine--tRNA ligase</fullName>
        <ecNumber evidence="1">6.1.1.11</ecNumber>
    </recommendedName>
    <alternativeName>
        <fullName evidence="1">Seryl-tRNA synthetase</fullName>
        <shortName evidence="1">SerRS</shortName>
    </alternativeName>
    <alternativeName>
        <fullName evidence="1">Seryl-tRNA(Ser/Sec) synthetase</fullName>
    </alternativeName>
</protein>
<sequence>MLDPILLRKDLQTVVDRLKSRGVDFDIARFNELESRRKAVQTETESQQARRNALAKQIGQLKGKGAPEAEVQAVMAESQALPARLKALEDELAQTQAQLNDLLMSVPNLPHASVPQGASSDENVEVRRWLPGAADERGIPAALGFEVRDHVAVGEPLGLDFDLAARLSGARFSFMRGQMARLHRALAQFMLDLQTGTHGYTECYTPYIVNSSTLFGTGQLPKFKDDMFFVTKGGGDDEPKVDEQGNPLAREDQYLISTSEITLTSVVRETIVAGADLPLRLTAHTPCFRSEAGSGGRDTRGMIRQHQFDKVEMVQIAHPEHSYEALEEMVGHAERVLQLLELPYRVMLLCTGDMGFGSAKTYDLEVWLPAQDTWREISSVSNCETFQARRMQARFRNAQNKPEYVHTLNGSGLAVGRALVAVLENCQQADGSVRVPAVLQPYMGGLTVLEP</sequence>
<proteinExistence type="inferred from homology"/>
<accession>Q7VW08</accession>